<proteinExistence type="evidence at protein level"/>
<name>CWP22_TOBAC</name>
<dbReference type="PaxDb" id="4097-P82430"/>
<dbReference type="Proteomes" id="UP000084051">
    <property type="component" value="Unplaced"/>
</dbReference>
<dbReference type="GO" id="GO:0005576">
    <property type="term" value="C:extracellular region"/>
    <property type="evidence" value="ECO:0007669"/>
    <property type="project" value="UniProtKB-KW"/>
</dbReference>
<reference evidence="3" key="1">
    <citation type="journal article" date="2001" name="Planta">
        <title>Proteomic analysis reveals a novel set of cell wall proteins in a transformed tobacco cell culture that synthesises secondary walls as determined by biochemical and morphological parameters.</title>
        <authorList>
            <person name="Blee K.A."/>
            <person name="Wheatley E.R."/>
            <person name="Bonham V.A."/>
            <person name="Mitchell G.P."/>
            <person name="Robertson D."/>
            <person name="Slabas A.R."/>
            <person name="Burrell M.M."/>
            <person name="Wojtaszek P."/>
            <person name="Bolwell G.P."/>
        </authorList>
    </citation>
    <scope>PROTEIN SEQUENCE</scope>
    <scope>SUBCELLULAR LOCATION</scope>
    <source>
        <strain evidence="1">cv. Petit Havana</strain>
    </source>
</reference>
<comment type="subcellular location">
    <subcellularLocation>
        <location evidence="1">Secreted</location>
        <location evidence="1">Cell wall</location>
    </subcellularLocation>
</comment>
<accession>P82430</accession>
<organism>
    <name type="scientific">Nicotiana tabacum</name>
    <name type="common">Common tobacco</name>
    <dbReference type="NCBI Taxonomy" id="4097"/>
    <lineage>
        <taxon>Eukaryota</taxon>
        <taxon>Viridiplantae</taxon>
        <taxon>Streptophyta</taxon>
        <taxon>Embryophyta</taxon>
        <taxon>Tracheophyta</taxon>
        <taxon>Spermatophyta</taxon>
        <taxon>Magnoliopsida</taxon>
        <taxon>eudicotyledons</taxon>
        <taxon>Gunneridae</taxon>
        <taxon>Pentapetalae</taxon>
        <taxon>asterids</taxon>
        <taxon>lamiids</taxon>
        <taxon>Solanales</taxon>
        <taxon>Solanaceae</taxon>
        <taxon>Nicotianoideae</taxon>
        <taxon>Nicotianeae</taxon>
        <taxon>Nicotiana</taxon>
    </lineage>
</organism>
<keyword id="KW-0134">Cell wall</keyword>
<keyword id="KW-0903">Direct protein sequencing</keyword>
<keyword id="KW-1185">Reference proteome</keyword>
<keyword id="KW-0964">Secreted</keyword>
<sequence>ATVEVRNNPGYXVVA</sequence>
<protein>
    <recommendedName>
        <fullName>25 kDa cell wall protein</fullName>
    </recommendedName>
</protein>
<feature type="chain" id="PRO_0000079698" description="25 kDa cell wall protein">
    <location>
        <begin position="1"/>
        <end position="15" status="greater than"/>
    </location>
</feature>
<feature type="non-terminal residue" evidence="2">
    <location>
        <position position="15"/>
    </location>
</feature>
<evidence type="ECO:0000269" key="1">
    <source>
    </source>
</evidence>
<evidence type="ECO:0000303" key="2">
    <source>
    </source>
</evidence>
<evidence type="ECO:0000305" key="3"/>